<reference key="1">
    <citation type="journal article" date="2003" name="Nature">
        <title>Unique physiological and pathogenic features of Leptospira interrogans revealed by whole-genome sequencing.</title>
        <authorList>
            <person name="Ren S.-X."/>
            <person name="Fu G."/>
            <person name="Jiang X.-G."/>
            <person name="Zeng R."/>
            <person name="Miao Y.-G."/>
            <person name="Xu H."/>
            <person name="Zhang Y.-X."/>
            <person name="Xiong H."/>
            <person name="Lu G."/>
            <person name="Lu L.-F."/>
            <person name="Jiang H.-Q."/>
            <person name="Jia J."/>
            <person name="Tu Y.-F."/>
            <person name="Jiang J.-X."/>
            <person name="Gu W.-Y."/>
            <person name="Zhang Y.-Q."/>
            <person name="Cai Z."/>
            <person name="Sheng H.-H."/>
            <person name="Yin H.-F."/>
            <person name="Zhang Y."/>
            <person name="Zhu G.-F."/>
            <person name="Wan M."/>
            <person name="Huang H.-L."/>
            <person name="Qian Z."/>
            <person name="Wang S.-Y."/>
            <person name="Ma W."/>
            <person name="Yao Z.-J."/>
            <person name="Shen Y."/>
            <person name="Qiang B.-Q."/>
            <person name="Xia Q.-C."/>
            <person name="Guo X.-K."/>
            <person name="Danchin A."/>
            <person name="Saint Girons I."/>
            <person name="Somerville R.L."/>
            <person name="Wen Y.-M."/>
            <person name="Shi M.-H."/>
            <person name="Chen Z."/>
            <person name="Xu J.-G."/>
            <person name="Zhao G.-P."/>
        </authorList>
    </citation>
    <scope>NUCLEOTIDE SEQUENCE [LARGE SCALE GENOMIC DNA]</scope>
    <source>
        <strain>56601</strain>
    </source>
</reference>
<name>SURE_LEPIN</name>
<comment type="function">
    <text evidence="1">Nucleotidase that shows phosphatase activity on nucleoside 5'-monophosphates.</text>
</comment>
<comment type="catalytic activity">
    <reaction evidence="1">
        <text>a ribonucleoside 5'-phosphate + H2O = a ribonucleoside + phosphate</text>
        <dbReference type="Rhea" id="RHEA:12484"/>
        <dbReference type="ChEBI" id="CHEBI:15377"/>
        <dbReference type="ChEBI" id="CHEBI:18254"/>
        <dbReference type="ChEBI" id="CHEBI:43474"/>
        <dbReference type="ChEBI" id="CHEBI:58043"/>
        <dbReference type="EC" id="3.1.3.5"/>
    </reaction>
</comment>
<comment type="cofactor">
    <cofactor evidence="1">
        <name>a divalent metal cation</name>
        <dbReference type="ChEBI" id="CHEBI:60240"/>
    </cofactor>
    <text evidence="1">Binds 1 divalent metal cation per subunit.</text>
</comment>
<comment type="subcellular location">
    <subcellularLocation>
        <location evidence="1">Cytoplasm</location>
    </subcellularLocation>
</comment>
<comment type="similarity">
    <text evidence="1">Belongs to the SurE nucleotidase family.</text>
</comment>
<sequence length="250" mass="27556">MNILITNDDGIASSGIKALETILQKEHNTYLIAPLRERSATSMALSIYDSMRVERINDNHYIVDGYPADCVNIGLHGEIFPKIDLVLSGINRGVNMGHDVHYSGTVGAARHGAIHKKLSLAVSSGNIAKDYDYIREAEFVRKFINEYSSQLKVGVVYNMNIPSDFISSMENLRVTKLGKRTYEDTYSQKNIIGGIADFYLGGSELGHSTEEGTDFTAFFSGKISLTPLSLDQTDFSILTQLSDSLSKNIS</sequence>
<protein>
    <recommendedName>
        <fullName evidence="1">5'-nucleotidase SurE</fullName>
        <ecNumber evidence="1">3.1.3.5</ecNumber>
    </recommendedName>
    <alternativeName>
        <fullName evidence="1">Nucleoside 5'-monophosphate phosphohydrolase</fullName>
    </alternativeName>
</protein>
<keyword id="KW-0963">Cytoplasm</keyword>
<keyword id="KW-0378">Hydrolase</keyword>
<keyword id="KW-0479">Metal-binding</keyword>
<keyword id="KW-0547">Nucleotide-binding</keyword>
<keyword id="KW-1185">Reference proteome</keyword>
<accession>Q8EZH9</accession>
<gene>
    <name evidence="1" type="primary">surE</name>
    <name type="ordered locus">LA_3874</name>
</gene>
<organism>
    <name type="scientific">Leptospira interrogans serogroup Icterohaemorrhagiae serovar Lai (strain 56601)</name>
    <dbReference type="NCBI Taxonomy" id="189518"/>
    <lineage>
        <taxon>Bacteria</taxon>
        <taxon>Pseudomonadati</taxon>
        <taxon>Spirochaetota</taxon>
        <taxon>Spirochaetia</taxon>
        <taxon>Leptospirales</taxon>
        <taxon>Leptospiraceae</taxon>
        <taxon>Leptospira</taxon>
    </lineage>
</organism>
<dbReference type="EC" id="3.1.3.5" evidence="1"/>
<dbReference type="EMBL" id="AE010300">
    <property type="protein sequence ID" value="AAN51072.1"/>
    <property type="molecule type" value="Genomic_DNA"/>
</dbReference>
<dbReference type="RefSeq" id="NP_714054.1">
    <property type="nucleotide sequence ID" value="NC_004342.2"/>
</dbReference>
<dbReference type="RefSeq" id="WP_001023250.1">
    <property type="nucleotide sequence ID" value="NC_004342.2"/>
</dbReference>
<dbReference type="SMR" id="Q8EZH9"/>
<dbReference type="FunCoup" id="Q8EZH9">
    <property type="interactions" value="181"/>
</dbReference>
<dbReference type="STRING" id="189518.LA_3874"/>
<dbReference type="PaxDb" id="189518-LA_3874"/>
<dbReference type="EnsemblBacteria" id="AAN51072">
    <property type="protein sequence ID" value="AAN51072"/>
    <property type="gene ID" value="LA_3874"/>
</dbReference>
<dbReference type="GeneID" id="61142968"/>
<dbReference type="KEGG" id="lil:LA_3874"/>
<dbReference type="PATRIC" id="fig|189518.3.peg.3844"/>
<dbReference type="HOGENOM" id="CLU_045192_1_2_12"/>
<dbReference type="InParanoid" id="Q8EZH9"/>
<dbReference type="OrthoDB" id="9780815at2"/>
<dbReference type="Proteomes" id="UP000001408">
    <property type="component" value="Chromosome I"/>
</dbReference>
<dbReference type="GO" id="GO:0005737">
    <property type="term" value="C:cytoplasm"/>
    <property type="evidence" value="ECO:0007669"/>
    <property type="project" value="UniProtKB-SubCell"/>
</dbReference>
<dbReference type="GO" id="GO:0008254">
    <property type="term" value="F:3'-nucleotidase activity"/>
    <property type="evidence" value="ECO:0000318"/>
    <property type="project" value="GO_Central"/>
</dbReference>
<dbReference type="GO" id="GO:0008253">
    <property type="term" value="F:5'-nucleotidase activity"/>
    <property type="evidence" value="ECO:0000318"/>
    <property type="project" value="GO_Central"/>
</dbReference>
<dbReference type="GO" id="GO:0004309">
    <property type="term" value="F:exopolyphosphatase activity"/>
    <property type="evidence" value="ECO:0000318"/>
    <property type="project" value="GO_Central"/>
</dbReference>
<dbReference type="GO" id="GO:0046872">
    <property type="term" value="F:metal ion binding"/>
    <property type="evidence" value="ECO:0007669"/>
    <property type="project" value="UniProtKB-UniRule"/>
</dbReference>
<dbReference type="GO" id="GO:0000166">
    <property type="term" value="F:nucleotide binding"/>
    <property type="evidence" value="ECO:0007669"/>
    <property type="project" value="UniProtKB-KW"/>
</dbReference>
<dbReference type="FunFam" id="3.40.1210.10:FF:000001">
    <property type="entry name" value="5'/3'-nucleotidase SurE"/>
    <property type="match status" value="1"/>
</dbReference>
<dbReference type="Gene3D" id="3.40.1210.10">
    <property type="entry name" value="Survival protein SurE-like phosphatase/nucleotidase"/>
    <property type="match status" value="1"/>
</dbReference>
<dbReference type="HAMAP" id="MF_00060">
    <property type="entry name" value="SurE"/>
    <property type="match status" value="1"/>
</dbReference>
<dbReference type="InterPro" id="IPR030048">
    <property type="entry name" value="SurE"/>
</dbReference>
<dbReference type="InterPro" id="IPR002828">
    <property type="entry name" value="SurE-like_Pase/nucleotidase"/>
</dbReference>
<dbReference type="InterPro" id="IPR036523">
    <property type="entry name" value="SurE-like_sf"/>
</dbReference>
<dbReference type="NCBIfam" id="TIGR00087">
    <property type="entry name" value="surE"/>
    <property type="match status" value="1"/>
</dbReference>
<dbReference type="PANTHER" id="PTHR30457">
    <property type="entry name" value="5'-NUCLEOTIDASE SURE"/>
    <property type="match status" value="1"/>
</dbReference>
<dbReference type="PANTHER" id="PTHR30457:SF12">
    <property type="entry name" value="5'_3'-NUCLEOTIDASE SURE"/>
    <property type="match status" value="1"/>
</dbReference>
<dbReference type="Pfam" id="PF01975">
    <property type="entry name" value="SurE"/>
    <property type="match status" value="1"/>
</dbReference>
<dbReference type="SUPFAM" id="SSF64167">
    <property type="entry name" value="SurE-like"/>
    <property type="match status" value="1"/>
</dbReference>
<evidence type="ECO:0000255" key="1">
    <source>
        <dbReference type="HAMAP-Rule" id="MF_00060"/>
    </source>
</evidence>
<proteinExistence type="inferred from homology"/>
<feature type="chain" id="PRO_0000111821" description="5'-nucleotidase SurE">
    <location>
        <begin position="1"/>
        <end position="250"/>
    </location>
</feature>
<feature type="binding site" evidence="1">
    <location>
        <position position="8"/>
    </location>
    <ligand>
        <name>a divalent metal cation</name>
        <dbReference type="ChEBI" id="CHEBI:60240"/>
    </ligand>
</feature>
<feature type="binding site" evidence="1">
    <location>
        <position position="9"/>
    </location>
    <ligand>
        <name>a divalent metal cation</name>
        <dbReference type="ChEBI" id="CHEBI:60240"/>
    </ligand>
</feature>
<feature type="binding site" evidence="1">
    <location>
        <position position="39"/>
    </location>
    <ligand>
        <name>a divalent metal cation</name>
        <dbReference type="ChEBI" id="CHEBI:60240"/>
    </ligand>
</feature>
<feature type="binding site" evidence="1">
    <location>
        <position position="91"/>
    </location>
    <ligand>
        <name>a divalent metal cation</name>
        <dbReference type="ChEBI" id="CHEBI:60240"/>
    </ligand>
</feature>